<dbReference type="EC" id="2.1.1.177" evidence="1"/>
<dbReference type="EMBL" id="CP000943">
    <property type="protein sequence ID" value="ACA18570.1"/>
    <property type="molecule type" value="Genomic_DNA"/>
</dbReference>
<dbReference type="RefSeq" id="WP_012333961.1">
    <property type="nucleotide sequence ID" value="NC_010511.1"/>
</dbReference>
<dbReference type="SMR" id="B0UP23"/>
<dbReference type="STRING" id="426117.M446_4221"/>
<dbReference type="KEGG" id="met:M446_4221"/>
<dbReference type="eggNOG" id="COG1576">
    <property type="taxonomic scope" value="Bacteria"/>
</dbReference>
<dbReference type="HOGENOM" id="CLU_100552_1_1_5"/>
<dbReference type="GO" id="GO:0005737">
    <property type="term" value="C:cytoplasm"/>
    <property type="evidence" value="ECO:0007669"/>
    <property type="project" value="UniProtKB-SubCell"/>
</dbReference>
<dbReference type="GO" id="GO:0070038">
    <property type="term" value="F:rRNA (pseudouridine-N3-)-methyltransferase activity"/>
    <property type="evidence" value="ECO:0007669"/>
    <property type="project" value="UniProtKB-UniRule"/>
</dbReference>
<dbReference type="CDD" id="cd18081">
    <property type="entry name" value="RlmH-like"/>
    <property type="match status" value="1"/>
</dbReference>
<dbReference type="Gene3D" id="3.40.1280.10">
    <property type="match status" value="1"/>
</dbReference>
<dbReference type="HAMAP" id="MF_00658">
    <property type="entry name" value="23SrRNA_methyltr_H"/>
    <property type="match status" value="1"/>
</dbReference>
<dbReference type="InterPro" id="IPR029028">
    <property type="entry name" value="Alpha/beta_knot_MTases"/>
</dbReference>
<dbReference type="InterPro" id="IPR003742">
    <property type="entry name" value="RlmH-like"/>
</dbReference>
<dbReference type="InterPro" id="IPR029026">
    <property type="entry name" value="tRNA_m1G_MTases_N"/>
</dbReference>
<dbReference type="NCBIfam" id="NF000989">
    <property type="entry name" value="PRK00103.2-3"/>
    <property type="match status" value="1"/>
</dbReference>
<dbReference type="NCBIfam" id="NF000991">
    <property type="entry name" value="PRK00103.2-5"/>
    <property type="match status" value="1"/>
</dbReference>
<dbReference type="PANTHER" id="PTHR33603">
    <property type="entry name" value="METHYLTRANSFERASE"/>
    <property type="match status" value="1"/>
</dbReference>
<dbReference type="PANTHER" id="PTHR33603:SF1">
    <property type="entry name" value="RIBOSOMAL RNA LARGE SUBUNIT METHYLTRANSFERASE H"/>
    <property type="match status" value="1"/>
</dbReference>
<dbReference type="Pfam" id="PF02590">
    <property type="entry name" value="SPOUT_MTase"/>
    <property type="match status" value="1"/>
</dbReference>
<dbReference type="PIRSF" id="PIRSF004505">
    <property type="entry name" value="MT_bac"/>
    <property type="match status" value="1"/>
</dbReference>
<dbReference type="SUPFAM" id="SSF75217">
    <property type="entry name" value="alpha/beta knot"/>
    <property type="match status" value="1"/>
</dbReference>
<feature type="chain" id="PRO_0000366623" description="Ribosomal RNA large subunit methyltransferase H">
    <location>
        <begin position="1"/>
        <end position="162"/>
    </location>
</feature>
<feature type="binding site" evidence="1">
    <location>
        <position position="108"/>
    </location>
    <ligand>
        <name>S-adenosyl-L-methionine</name>
        <dbReference type="ChEBI" id="CHEBI:59789"/>
    </ligand>
</feature>
<reference key="1">
    <citation type="submission" date="2008-02" db="EMBL/GenBank/DDBJ databases">
        <title>Complete sequence of chromosome of Methylobacterium sp. 4-46.</title>
        <authorList>
            <consortium name="US DOE Joint Genome Institute"/>
            <person name="Copeland A."/>
            <person name="Lucas S."/>
            <person name="Lapidus A."/>
            <person name="Glavina del Rio T."/>
            <person name="Dalin E."/>
            <person name="Tice H."/>
            <person name="Bruce D."/>
            <person name="Goodwin L."/>
            <person name="Pitluck S."/>
            <person name="Chertkov O."/>
            <person name="Brettin T."/>
            <person name="Detter J.C."/>
            <person name="Han C."/>
            <person name="Kuske C.R."/>
            <person name="Schmutz J."/>
            <person name="Larimer F."/>
            <person name="Land M."/>
            <person name="Hauser L."/>
            <person name="Kyrpides N."/>
            <person name="Ivanova N."/>
            <person name="Marx C.J."/>
            <person name="Richardson P."/>
        </authorList>
    </citation>
    <scope>NUCLEOTIDE SEQUENCE [LARGE SCALE GENOMIC DNA]</scope>
    <source>
        <strain>4-46</strain>
    </source>
</reference>
<gene>
    <name evidence="1" type="primary">rlmH</name>
    <name type="ordered locus">M446_4221</name>
</gene>
<protein>
    <recommendedName>
        <fullName evidence="1">Ribosomal RNA large subunit methyltransferase H</fullName>
        <ecNumber evidence="1">2.1.1.177</ecNumber>
    </recommendedName>
    <alternativeName>
        <fullName evidence="1">23S rRNA (pseudouridine1915-N3)-methyltransferase</fullName>
    </alternativeName>
    <alternativeName>
        <fullName evidence="1">23S rRNA m3Psi1915 methyltransferase</fullName>
    </alternativeName>
    <alternativeName>
        <fullName evidence="1">rRNA (pseudouridine-N3-)-methyltransferase RlmH</fullName>
    </alternativeName>
</protein>
<name>RLMH_METS4</name>
<proteinExistence type="inferred from homology"/>
<sequence length="162" mass="16996">MRLALVAVGRLKRGPERDLAEGYRARADALARGLGLSAVQLTELPESRARRAPDRCAEEGAAILACLPAGSAVIVMDEGGRAVTSAGLAEQVAAWRDGGRPGLTIVIGGADGLCESVRHRADLVFAFGAATLPHGLVRVLVLEQLYRVMTILAGHPYHRGAP</sequence>
<evidence type="ECO:0000255" key="1">
    <source>
        <dbReference type="HAMAP-Rule" id="MF_00658"/>
    </source>
</evidence>
<keyword id="KW-0963">Cytoplasm</keyword>
<keyword id="KW-0489">Methyltransferase</keyword>
<keyword id="KW-0698">rRNA processing</keyword>
<keyword id="KW-0949">S-adenosyl-L-methionine</keyword>
<keyword id="KW-0808">Transferase</keyword>
<accession>B0UP23</accession>
<comment type="function">
    <text evidence="1">Specifically methylates the pseudouridine at position 1915 (m3Psi1915) in 23S rRNA.</text>
</comment>
<comment type="catalytic activity">
    <reaction evidence="1">
        <text>pseudouridine(1915) in 23S rRNA + S-adenosyl-L-methionine = N(3)-methylpseudouridine(1915) in 23S rRNA + S-adenosyl-L-homocysteine + H(+)</text>
        <dbReference type="Rhea" id="RHEA:42752"/>
        <dbReference type="Rhea" id="RHEA-COMP:10221"/>
        <dbReference type="Rhea" id="RHEA-COMP:10222"/>
        <dbReference type="ChEBI" id="CHEBI:15378"/>
        <dbReference type="ChEBI" id="CHEBI:57856"/>
        <dbReference type="ChEBI" id="CHEBI:59789"/>
        <dbReference type="ChEBI" id="CHEBI:65314"/>
        <dbReference type="ChEBI" id="CHEBI:74486"/>
        <dbReference type="EC" id="2.1.1.177"/>
    </reaction>
</comment>
<comment type="subunit">
    <text evidence="1">Homodimer.</text>
</comment>
<comment type="subcellular location">
    <subcellularLocation>
        <location evidence="1">Cytoplasm</location>
    </subcellularLocation>
</comment>
<comment type="similarity">
    <text evidence="1">Belongs to the RNA methyltransferase RlmH family.</text>
</comment>
<organism>
    <name type="scientific">Methylobacterium sp. (strain 4-46)</name>
    <dbReference type="NCBI Taxonomy" id="426117"/>
    <lineage>
        <taxon>Bacteria</taxon>
        <taxon>Pseudomonadati</taxon>
        <taxon>Pseudomonadota</taxon>
        <taxon>Alphaproteobacteria</taxon>
        <taxon>Hyphomicrobiales</taxon>
        <taxon>Methylobacteriaceae</taxon>
        <taxon>Methylobacterium</taxon>
    </lineage>
</organism>